<reference key="1">
    <citation type="journal article" date="2002" name="Nucleic Acids Res.">
        <title>Genome sequence of Shigella flexneri 2a: insights into pathogenicity through comparison with genomes of Escherichia coli K12 and O157.</title>
        <authorList>
            <person name="Jin Q."/>
            <person name="Yuan Z."/>
            <person name="Xu J."/>
            <person name="Wang Y."/>
            <person name="Shen Y."/>
            <person name="Lu W."/>
            <person name="Wang J."/>
            <person name="Liu H."/>
            <person name="Yang J."/>
            <person name="Yang F."/>
            <person name="Zhang X."/>
            <person name="Zhang J."/>
            <person name="Yang G."/>
            <person name="Wu H."/>
            <person name="Qu D."/>
            <person name="Dong J."/>
            <person name="Sun L."/>
            <person name="Xue Y."/>
            <person name="Zhao A."/>
            <person name="Gao Y."/>
            <person name="Zhu J."/>
            <person name="Kan B."/>
            <person name="Ding K."/>
            <person name="Chen S."/>
            <person name="Cheng H."/>
            <person name="Yao Z."/>
            <person name="He B."/>
            <person name="Chen R."/>
            <person name="Ma D."/>
            <person name="Qiang B."/>
            <person name="Wen Y."/>
            <person name="Hou Y."/>
            <person name="Yu J."/>
        </authorList>
    </citation>
    <scope>NUCLEOTIDE SEQUENCE [LARGE SCALE GENOMIC DNA]</scope>
    <source>
        <strain>301 / Serotype 2a</strain>
    </source>
</reference>
<reference key="2">
    <citation type="journal article" date="2003" name="Infect. Immun.">
        <title>Complete genome sequence and comparative genomics of Shigella flexneri serotype 2a strain 2457T.</title>
        <authorList>
            <person name="Wei J."/>
            <person name="Goldberg M.B."/>
            <person name="Burland V."/>
            <person name="Venkatesan M.M."/>
            <person name="Deng W."/>
            <person name="Fournier G."/>
            <person name="Mayhew G.F."/>
            <person name="Plunkett G. III"/>
            <person name="Rose D.J."/>
            <person name="Darling A."/>
            <person name="Mau B."/>
            <person name="Perna N.T."/>
            <person name="Payne S.M."/>
            <person name="Runyen-Janecky L.J."/>
            <person name="Zhou S."/>
            <person name="Schwartz D.C."/>
            <person name="Blattner F.R."/>
        </authorList>
    </citation>
    <scope>NUCLEOTIDE SEQUENCE [LARGE SCALE GENOMIC DNA]</scope>
    <source>
        <strain>ATCC 700930 / 2457T / Serotype 2a</strain>
    </source>
</reference>
<keyword id="KW-0963">Cytoplasm</keyword>
<keyword id="KW-1185">Reference proteome</keyword>
<keyword id="KW-0819">tRNA processing</keyword>
<sequence length="81" mass="9095">MTDLFSSPDHTLDALGLRCPEPVMMVRKTVRNMQPGETLLIIADDPATTRDIPGFCTFMEHELVAKETDGLPYRYLIRKGG</sequence>
<gene>
    <name evidence="1" type="primary">tusA</name>
    <name type="ordered locus">SF3488</name>
    <name type="ordered locus">S4275</name>
</gene>
<name>TUSA_SHIFL</name>
<feature type="chain" id="PRO_0000159054" description="Sulfur carrier protein TusA">
    <location>
        <begin position="1"/>
        <end position="81"/>
    </location>
</feature>
<feature type="active site" description="Cysteine persulfide intermediate" evidence="1">
    <location>
        <position position="19"/>
    </location>
</feature>
<accession>P0A893</accession>
<accession>P37618</accession>
<dbReference type="EMBL" id="AE005674">
    <property type="protein sequence ID" value="AAN44947.1"/>
    <property type="molecule type" value="Genomic_DNA"/>
</dbReference>
<dbReference type="EMBL" id="AE014073">
    <property type="protein sequence ID" value="AAP19235.1"/>
    <property type="molecule type" value="Genomic_DNA"/>
</dbReference>
<dbReference type="RefSeq" id="WP_000130621.1">
    <property type="nucleotide sequence ID" value="NZ_WPGW01000010.1"/>
</dbReference>
<dbReference type="SMR" id="P0A893"/>
<dbReference type="STRING" id="198214.SF3488"/>
<dbReference type="PaxDb" id="198214-SF3488"/>
<dbReference type="GeneID" id="93778521"/>
<dbReference type="KEGG" id="sfl:SF3488"/>
<dbReference type="KEGG" id="sfx:S4275"/>
<dbReference type="PATRIC" id="fig|198214.7.peg.4109"/>
<dbReference type="HOGENOM" id="CLU_165255_5_0_6"/>
<dbReference type="Proteomes" id="UP000001006">
    <property type="component" value="Chromosome"/>
</dbReference>
<dbReference type="Proteomes" id="UP000002673">
    <property type="component" value="Chromosome"/>
</dbReference>
<dbReference type="GO" id="GO:0005737">
    <property type="term" value="C:cytoplasm"/>
    <property type="evidence" value="ECO:0007669"/>
    <property type="project" value="UniProtKB-SubCell"/>
</dbReference>
<dbReference type="GO" id="GO:0097163">
    <property type="term" value="F:sulfur carrier activity"/>
    <property type="evidence" value="ECO:0007669"/>
    <property type="project" value="UniProtKB-UniRule"/>
</dbReference>
<dbReference type="GO" id="GO:0002143">
    <property type="term" value="P:tRNA wobble position uridine thiolation"/>
    <property type="evidence" value="ECO:0007669"/>
    <property type="project" value="InterPro"/>
</dbReference>
<dbReference type="CDD" id="cd03423">
    <property type="entry name" value="SirA"/>
    <property type="match status" value="1"/>
</dbReference>
<dbReference type="FunFam" id="3.30.110.40:FF:000002">
    <property type="entry name" value="Sulfur carrier protein TusA"/>
    <property type="match status" value="1"/>
</dbReference>
<dbReference type="Gene3D" id="3.30.110.40">
    <property type="entry name" value="TusA-like domain"/>
    <property type="match status" value="1"/>
</dbReference>
<dbReference type="HAMAP" id="MF_00413">
    <property type="entry name" value="Thiourid_synth_A"/>
    <property type="match status" value="1"/>
</dbReference>
<dbReference type="InterPro" id="IPR022931">
    <property type="entry name" value="Sulphur_carrier_TusA"/>
</dbReference>
<dbReference type="InterPro" id="IPR001455">
    <property type="entry name" value="TusA-like"/>
</dbReference>
<dbReference type="InterPro" id="IPR036868">
    <property type="entry name" value="TusA-like_sf"/>
</dbReference>
<dbReference type="NCBIfam" id="NF001423">
    <property type="entry name" value="PRK00299.1"/>
    <property type="match status" value="1"/>
</dbReference>
<dbReference type="PANTHER" id="PTHR33279:SF2">
    <property type="entry name" value="SULFUR CARRIER PROTEIN TUSA"/>
    <property type="match status" value="1"/>
</dbReference>
<dbReference type="PANTHER" id="PTHR33279">
    <property type="entry name" value="SULFUR CARRIER PROTEIN YEDF-RELATED"/>
    <property type="match status" value="1"/>
</dbReference>
<dbReference type="Pfam" id="PF01206">
    <property type="entry name" value="TusA"/>
    <property type="match status" value="1"/>
</dbReference>
<dbReference type="SUPFAM" id="SSF64307">
    <property type="entry name" value="SirA-like"/>
    <property type="match status" value="1"/>
</dbReference>
<dbReference type="PROSITE" id="PS01148">
    <property type="entry name" value="UPF0033"/>
    <property type="match status" value="1"/>
</dbReference>
<proteinExistence type="inferred from homology"/>
<organism>
    <name type="scientific">Shigella flexneri</name>
    <dbReference type="NCBI Taxonomy" id="623"/>
    <lineage>
        <taxon>Bacteria</taxon>
        <taxon>Pseudomonadati</taxon>
        <taxon>Pseudomonadota</taxon>
        <taxon>Gammaproteobacteria</taxon>
        <taxon>Enterobacterales</taxon>
        <taxon>Enterobacteriaceae</taxon>
        <taxon>Shigella</taxon>
    </lineage>
</organism>
<evidence type="ECO:0000255" key="1">
    <source>
        <dbReference type="HAMAP-Rule" id="MF_00413"/>
    </source>
</evidence>
<comment type="function">
    <text evidence="1">Sulfur carrier protein involved in sulfur trafficking in the cell. Part of a sulfur-relay system required for 2-thiolation during synthesis of 2-thiouridine of the modified wobble base 5-methylaminomethyl-2-thiouridine (mnm(5)s(2)U) in tRNA. Interacts with IscS and stimulates its cysteine desulfurase activity. Accepts an activated sulfur from IscS, which is then transferred to TusD, and thus determines the direction of sulfur flow from IscS to 2-thiouridine formation. Also appears to be involved in sulfur transfer for the biosynthesis of molybdopterin.</text>
</comment>
<comment type="pathway">
    <text evidence="1">tRNA modification.</text>
</comment>
<comment type="subunit">
    <text evidence="1">Interacts with IscS.</text>
</comment>
<comment type="subcellular location">
    <subcellularLocation>
        <location evidence="1">Cytoplasm</location>
    </subcellularLocation>
</comment>
<comment type="similarity">
    <text evidence="1">Belongs to the sulfur carrier protein TusA family.</text>
</comment>
<protein>
    <recommendedName>
        <fullName evidence="1">Sulfur carrier protein TusA</fullName>
    </recommendedName>
    <alternativeName>
        <fullName evidence="1">Sulfur mediator TusA</fullName>
    </alternativeName>
    <alternativeName>
        <fullName evidence="1">Sulfur transfer protein TusA</fullName>
    </alternativeName>
    <alternativeName>
        <fullName evidence="1">tRNA 2-thiouridine synthesizing protein A</fullName>
    </alternativeName>
</protein>